<sequence length="206" mass="22977">MDEDVLTTLKILIIGESGVGKSSLLLRFTDDTFDPELAATIGVDFKVKTISVDGNKAKLAIWDTAGQERFRTLTPSYYRGAQGVILVYDVTRRDTFVKLDNWLNELETYCTRNDIVNMLVGNKIDKENREVDRNEGLKFARKHSMLFIEASAKTCDGVQCAFEELVEKIIQTPGLWESENQNKGVKLSHREEGQGGGACGGYCSVL</sequence>
<comment type="function">
    <text evidence="2 5 8 10">The small GTPases Rab are key regulators of intracellular membrane trafficking, from the formation of transport vesicles to their fusion with membranes (PubMed:24891604, PubMed:30970241). Rabs cycle between an inactive GDP-bound form and an active GTP-bound form that is able to recruit to membranes different sets of downstream effectors directly responsible for vesicle formation, movement, tethering and fusion (PubMed:24891604, PubMed:30970241). RAB18 is required for the localization of ZFYVE1 to lipid droplets and for its function in mediating the formation of endoplasmic reticulum-lipid droplets (ER-LD) contacts (PubMed:30970241). Also required for maintaining endoplasmic reticulum structure (PubMed:24891604). Plays a role in apical endocytosis/recycling (By similarity). Plays a key role in eye and brain development and neurodegeneration (PubMed:21473985).</text>
</comment>
<comment type="catalytic activity">
    <reaction evidence="8">
        <text>GTP + H2O = GDP + phosphate + H(+)</text>
        <dbReference type="Rhea" id="RHEA:19669"/>
        <dbReference type="ChEBI" id="CHEBI:15377"/>
        <dbReference type="ChEBI" id="CHEBI:15378"/>
        <dbReference type="ChEBI" id="CHEBI:37565"/>
        <dbReference type="ChEBI" id="CHEBI:43474"/>
        <dbReference type="ChEBI" id="CHEBI:58189"/>
        <dbReference type="EC" id="3.6.5.2"/>
    </reaction>
    <physiologicalReaction direction="left-to-right" evidence="17">
        <dbReference type="Rhea" id="RHEA:19670"/>
    </physiologicalReaction>
</comment>
<comment type="cofactor">
    <cofactor evidence="13">
        <name>Mg(2+)</name>
        <dbReference type="ChEBI" id="CHEBI:18420"/>
    </cofactor>
</comment>
<comment type="activity regulation">
    <text evidence="8 9 16">Regulated by guanine nucleotide exchange factor (GEF) RAB3GAP1-RAB3GAP2 complex at the cis-Golgi membrane which promotes the exchange of bound GDP for free GTP (PubMed:24891604, PubMed:26063829). Regulated by GTPase activating protein (GAP) TBC1D20 at the ER membrane which increases the GTP hydrolysis activity (PubMed:26063829). Inhibited by GDP dissociation inhibitors (GDIs) which prevent Rab-GDP dissociation (Probable).</text>
</comment>
<comment type="subunit">
    <text evidence="10 11">Interacts (in GTP-bound form) with ZFYVE1 (PubMed:30970241, PubMed:31293035). Interacts with ZW10 and this interaction is enhanced in the presence of ZFYVE1 (PubMed:30970241). Interacts with BSCL2 (PubMed:30970241).</text>
</comment>
<comment type="subunit">
    <text evidence="7">(Microbial infection) Interacts with Hepatitis C virus (HCV) non-structural protein 5A; this interaction may promote the association of NS5A and other viral replicase components with lipid droplets.</text>
</comment>
<comment type="interaction">
    <interactant intactId="EBI-722247">
        <id>Q9NP72</id>
    </interactant>
    <interactant intactId="EBI-13059134">
        <id>Q13520</id>
        <label>AQP6</label>
    </interactant>
    <organismsDiffer>false</organismsDiffer>
    <experiments>3</experiments>
</comment>
<comment type="interaction">
    <interactant intactId="EBI-722247">
        <id>Q9NP72</id>
    </interactant>
    <interactant intactId="EBI-18535450">
        <id>Q9GZR5</id>
        <label>ELOVL4</label>
    </interactant>
    <organismsDiffer>false</organismsDiffer>
    <experiments>3</experiments>
</comment>
<comment type="interaction">
    <interactant intactId="EBI-722247">
        <id>Q9NP72</id>
    </interactant>
    <interactant intactId="EBI-529518">
        <id>Q86VP1</id>
        <label>TAX1BP1</label>
    </interactant>
    <organismsDiffer>false</organismsDiffer>
    <experiments>3</experiments>
</comment>
<comment type="interaction">
    <interactant intactId="EBI-722247">
        <id>Q9NP72</id>
    </interactant>
    <interactant intactId="EBI-6927873">
        <id>PRO_0000045602</id>
        <dbReference type="UniProtKB" id="Q99IB8"/>
    </interactant>
    <organismsDiffer>true</organismsDiffer>
    <experiments>5</experiments>
</comment>
<comment type="subcellular location">
    <subcellularLocation>
        <location evidence="8 9">Endoplasmic reticulum membrane</location>
    </subcellularLocation>
    <subcellularLocation>
        <location evidence="9">Golgi apparatus</location>
        <location evidence="9">cis-Golgi network membrane</location>
    </subcellularLocation>
    <subcellularLocation>
        <location evidence="7 10">Lipid droplet</location>
    </subcellularLocation>
    <subcellularLocation>
        <location evidence="2">Apical cell membrane</location>
    </subcellularLocation>
    <text evidence="9">Localized to the ER membrane as well as to the cis-Golgi in fibroblasts.</text>
</comment>
<comment type="alternative products">
    <event type="alternative splicing"/>
    <isoform>
        <id>Q9NP72-1</id>
        <name>1</name>
        <sequence type="displayed"/>
    </isoform>
    <isoform>
        <id>Q9NP72-2</id>
        <name>2</name>
        <sequence type="described" ref="VSP_043912"/>
    </isoform>
    <isoform>
        <id>Q9NP72-3</id>
        <name>3</name>
        <sequence type="described" ref="VSP_044883"/>
    </isoform>
</comment>
<comment type="tissue specificity">
    <text>Ubiquitous.</text>
</comment>
<comment type="domain">
    <text evidence="3">Switch 1, switch 2 and the interswitch regions are characteristic of Rab GTPases and mediate the interactions with Rab downstream effectors. The switch regions undergo conformational changes upon nucleotide binding which drive interaction with specific sets of effector proteins, with most effectors only binding to GTP-bound Rab.</text>
</comment>
<comment type="disease" evidence="5 6">
    <disease id="DI-03229">
        <name>Warburg micro syndrome 3</name>
        <acronym>WARBM3</acronym>
        <description>A rare syndrome characterized by microcephaly, microphthalmia, microcornia, congenital cataracts, optic atrophy, cortical dysplasia, in particular corpus callosum hypoplasia, severe intellectual disability, spastic diplegia, and hypogonadism.</description>
        <dbReference type="MIM" id="614222"/>
    </disease>
    <text>The disease is caused by variants affecting the gene represented in this entry.</text>
</comment>
<comment type="miscellaneous">
    <molecule>Isoform 2</molecule>
    <text evidence="16">Highly expressed in testis.</text>
</comment>
<comment type="similarity">
    <text evidence="16">Belongs to the small GTPase superfamily. Rab family.</text>
</comment>
<dbReference type="EC" id="3.6.5.2" evidence="8"/>
<dbReference type="EMBL" id="AJ277145">
    <property type="protein sequence ID" value="CAB86486.1"/>
    <property type="molecule type" value="Genomic_DNA"/>
</dbReference>
<dbReference type="EMBL" id="AJ277146">
    <property type="protein sequence ID" value="CAB86486.1"/>
    <property type="status" value="JOINED"/>
    <property type="molecule type" value="Genomic_DNA"/>
</dbReference>
<dbReference type="EMBL" id="AJ277147">
    <property type="protein sequence ID" value="CAB86486.1"/>
    <property type="status" value="JOINED"/>
    <property type="molecule type" value="Genomic_DNA"/>
</dbReference>
<dbReference type="EMBL" id="AJ277148">
    <property type="protein sequence ID" value="CAB86486.1"/>
    <property type="status" value="JOINED"/>
    <property type="molecule type" value="Genomic_DNA"/>
</dbReference>
<dbReference type="EMBL" id="AJ277149">
    <property type="protein sequence ID" value="CAB86486.1"/>
    <property type="status" value="JOINED"/>
    <property type="molecule type" value="Genomic_DNA"/>
</dbReference>
<dbReference type="EMBL" id="AF137372">
    <property type="protein sequence ID" value="AAF61433.1"/>
    <property type="molecule type" value="mRNA"/>
</dbReference>
<dbReference type="EMBL" id="AY574034">
    <property type="protein sequence ID" value="AAU08232.1"/>
    <property type="molecule type" value="mRNA"/>
</dbReference>
<dbReference type="EMBL" id="AF087860">
    <property type="protein sequence ID" value="AAP97170.1"/>
    <property type="molecule type" value="mRNA"/>
</dbReference>
<dbReference type="EMBL" id="AF498950">
    <property type="protein sequence ID" value="AAM21098.1"/>
    <property type="molecule type" value="mRNA"/>
</dbReference>
<dbReference type="EMBL" id="AF136974">
    <property type="protein sequence ID" value="AAG49435.1"/>
    <property type="molecule type" value="mRNA"/>
</dbReference>
<dbReference type="EMBL" id="AL136734">
    <property type="protein sequence ID" value="CAB66668.1"/>
    <property type="molecule type" value="mRNA"/>
</dbReference>
<dbReference type="EMBL" id="BT009840">
    <property type="protein sequence ID" value="AAP88842.1"/>
    <property type="molecule type" value="mRNA"/>
</dbReference>
<dbReference type="EMBL" id="CR533455">
    <property type="protein sequence ID" value="CAG38486.1"/>
    <property type="molecule type" value="mRNA"/>
</dbReference>
<dbReference type="EMBL" id="AK001555">
    <property type="protein sequence ID" value="BAG50939.1"/>
    <property type="molecule type" value="mRNA"/>
</dbReference>
<dbReference type="EMBL" id="AK295443">
    <property type="protein sequence ID" value="BAH12069.1"/>
    <property type="molecule type" value="mRNA"/>
</dbReference>
<dbReference type="EMBL" id="AK223153">
    <property type="protein sequence ID" value="BAD96873.1"/>
    <property type="molecule type" value="mRNA"/>
</dbReference>
<dbReference type="EMBL" id="AL138920">
    <property type="status" value="NOT_ANNOTATED_CDS"/>
    <property type="molecule type" value="Genomic_DNA"/>
</dbReference>
<dbReference type="EMBL" id="CH471072">
    <property type="protein sequence ID" value="EAW86054.1"/>
    <property type="molecule type" value="Genomic_DNA"/>
</dbReference>
<dbReference type="EMBL" id="CH471072">
    <property type="protein sequence ID" value="EAW86055.1"/>
    <property type="molecule type" value="Genomic_DNA"/>
</dbReference>
<dbReference type="EMBL" id="BC015014">
    <property type="protein sequence ID" value="AAH15014.1"/>
    <property type="molecule type" value="mRNA"/>
</dbReference>
<dbReference type="EMBL" id="BC029350">
    <property type="protein sequence ID" value="AAH29350.1"/>
    <property type="molecule type" value="mRNA"/>
</dbReference>
<dbReference type="CCDS" id="CCDS58073.1">
    <molecule id="Q9NP72-3"/>
</dbReference>
<dbReference type="CCDS" id="CCDS7155.1">
    <molecule id="Q9NP72-1"/>
</dbReference>
<dbReference type="CCDS" id="CCDS73081.1">
    <molecule id="Q9NP72-2"/>
</dbReference>
<dbReference type="RefSeq" id="NP_001243339.1">
    <molecule id="Q9NP72-2"/>
    <property type="nucleotide sequence ID" value="NM_001256410.2"/>
</dbReference>
<dbReference type="RefSeq" id="NP_001243340.1">
    <property type="nucleotide sequence ID" value="NM_001256411.1"/>
</dbReference>
<dbReference type="RefSeq" id="NP_001243341.1">
    <molecule id="Q9NP72-3"/>
    <property type="nucleotide sequence ID" value="NM_001256412.2"/>
</dbReference>
<dbReference type="RefSeq" id="NP_001243344.1">
    <property type="nucleotide sequence ID" value="NM_001256415.1"/>
</dbReference>
<dbReference type="RefSeq" id="NP_067075.1">
    <molecule id="Q9NP72-1"/>
    <property type="nucleotide sequence ID" value="NM_021252.5"/>
</dbReference>
<dbReference type="PDB" id="1X3S">
    <property type="method" value="X-ray"/>
    <property type="resolution" value="1.32 A"/>
    <property type="chains" value="A=1-182"/>
</dbReference>
<dbReference type="PDBsum" id="1X3S"/>
<dbReference type="SMR" id="Q9NP72"/>
<dbReference type="BioGRID" id="116591">
    <property type="interactions" value="181"/>
</dbReference>
<dbReference type="CORUM" id="Q9NP72"/>
<dbReference type="DIP" id="DIP-60514N"/>
<dbReference type="FunCoup" id="Q9NP72">
    <property type="interactions" value="3743"/>
</dbReference>
<dbReference type="IntAct" id="Q9NP72">
    <property type="interactions" value="118"/>
</dbReference>
<dbReference type="MINT" id="Q9NP72"/>
<dbReference type="STRING" id="9606.ENSP00000478479"/>
<dbReference type="GlyGen" id="Q9NP72">
    <property type="glycosylation" value="1 site, 1 O-linked glycan (1 site)"/>
</dbReference>
<dbReference type="iPTMnet" id="Q9NP72"/>
<dbReference type="PhosphoSitePlus" id="Q9NP72"/>
<dbReference type="SwissPalm" id="Q9NP72"/>
<dbReference type="BioMuta" id="RAB18"/>
<dbReference type="DMDM" id="12230528"/>
<dbReference type="jPOST" id="Q9NP72"/>
<dbReference type="MassIVE" id="Q9NP72"/>
<dbReference type="PeptideAtlas" id="Q9NP72"/>
<dbReference type="ProteomicsDB" id="6488"/>
<dbReference type="ProteomicsDB" id="81906">
    <molecule id="Q9NP72-1"/>
</dbReference>
<dbReference type="ProteomicsDB" id="81907">
    <molecule id="Q9NP72-2"/>
</dbReference>
<dbReference type="Pumba" id="Q9NP72"/>
<dbReference type="Antibodypedia" id="12749">
    <property type="antibodies" value="195 antibodies from 28 providers"/>
</dbReference>
<dbReference type="DNASU" id="22931"/>
<dbReference type="Ensembl" id="ENST00000356940.11">
    <molecule id="Q9NP72-1"/>
    <property type="protein sequence ID" value="ENSP00000349415.7"/>
    <property type="gene ID" value="ENSG00000099246.19"/>
</dbReference>
<dbReference type="Ensembl" id="ENST00000621805.6">
    <molecule id="Q9NP72-2"/>
    <property type="protein sequence ID" value="ENSP00000478479.1"/>
    <property type="gene ID" value="ENSG00000099246.19"/>
</dbReference>
<dbReference type="Ensembl" id="ENST00000682082.1">
    <molecule id="Q9NP72-1"/>
    <property type="protein sequence ID" value="ENSP00000507542.1"/>
    <property type="gene ID" value="ENSG00000099246.19"/>
</dbReference>
<dbReference type="Ensembl" id="ENST00000682389.1">
    <molecule id="Q9NP72-3"/>
    <property type="protein sequence ID" value="ENSP00000507154.1"/>
    <property type="gene ID" value="ENSG00000099246.19"/>
</dbReference>
<dbReference type="GeneID" id="22931"/>
<dbReference type="KEGG" id="hsa:22931"/>
<dbReference type="MANE-Select" id="ENST00000356940.11">
    <property type="protein sequence ID" value="ENSP00000349415.7"/>
    <property type="RefSeq nucleotide sequence ID" value="NM_021252.5"/>
    <property type="RefSeq protein sequence ID" value="NP_067075.1"/>
</dbReference>
<dbReference type="UCSC" id="uc001itv.5">
    <molecule id="Q9NP72-1"/>
    <property type="organism name" value="human"/>
</dbReference>
<dbReference type="AGR" id="HGNC:14244"/>
<dbReference type="CTD" id="22931"/>
<dbReference type="DisGeNET" id="22931"/>
<dbReference type="GeneCards" id="RAB18"/>
<dbReference type="GeneReviews" id="RAB18"/>
<dbReference type="HGNC" id="HGNC:14244">
    <property type="gene designation" value="RAB18"/>
</dbReference>
<dbReference type="HPA" id="ENSG00000099246">
    <property type="expression patterns" value="Low tissue specificity"/>
</dbReference>
<dbReference type="MalaCards" id="RAB18"/>
<dbReference type="MIM" id="602207">
    <property type="type" value="gene"/>
</dbReference>
<dbReference type="MIM" id="614222">
    <property type="type" value="phenotype"/>
</dbReference>
<dbReference type="neXtProt" id="NX_Q9NP72"/>
<dbReference type="OpenTargets" id="ENSG00000099246"/>
<dbReference type="Orphanet" id="2510">
    <property type="disease" value="Micro syndrome"/>
</dbReference>
<dbReference type="PharmGKB" id="PA34106"/>
<dbReference type="VEuPathDB" id="HostDB:ENSG00000099246"/>
<dbReference type="GeneTree" id="ENSGT00940000157325"/>
<dbReference type="InParanoid" id="Q9NP72"/>
<dbReference type="OMA" id="RVHKMDV"/>
<dbReference type="OrthoDB" id="9989112at2759"/>
<dbReference type="PAN-GO" id="Q9NP72">
    <property type="GO annotations" value="5 GO annotations based on evolutionary models"/>
</dbReference>
<dbReference type="PhylomeDB" id="Q9NP72"/>
<dbReference type="TreeFam" id="TF313448"/>
<dbReference type="PathwayCommons" id="Q9NP72"/>
<dbReference type="Reactome" id="R-HSA-6798695">
    <property type="pathway name" value="Neutrophil degranulation"/>
</dbReference>
<dbReference type="Reactome" id="R-HSA-6811436">
    <property type="pathway name" value="COPI-independent Golgi-to-ER retrograde traffic"/>
</dbReference>
<dbReference type="Reactome" id="R-HSA-8873719">
    <property type="pathway name" value="RAB geranylgeranylation"/>
</dbReference>
<dbReference type="Reactome" id="R-HSA-8876198">
    <property type="pathway name" value="RAB GEFs exchange GTP for GDP on RABs"/>
</dbReference>
<dbReference type="SignaLink" id="Q9NP72"/>
<dbReference type="BioGRID-ORCS" id="22931">
    <property type="hits" value="165 hits in 1165 CRISPR screens"/>
</dbReference>
<dbReference type="ChiTaRS" id="RAB18">
    <property type="organism name" value="human"/>
</dbReference>
<dbReference type="EvolutionaryTrace" id="Q9NP72"/>
<dbReference type="GeneWiki" id="RAB18"/>
<dbReference type="GenomeRNAi" id="22931"/>
<dbReference type="Pharos" id="Q9NP72">
    <property type="development level" value="Tbio"/>
</dbReference>
<dbReference type="PRO" id="PR:Q9NP72"/>
<dbReference type="Proteomes" id="UP000005640">
    <property type="component" value="Chromosome 10"/>
</dbReference>
<dbReference type="RNAct" id="Q9NP72">
    <property type="molecule type" value="protein"/>
</dbReference>
<dbReference type="Bgee" id="ENSG00000099246">
    <property type="expression patterns" value="Expressed in adrenal tissue and 196 other cell types or tissues"/>
</dbReference>
<dbReference type="ExpressionAtlas" id="Q9NP72">
    <property type="expression patterns" value="baseline and differential"/>
</dbReference>
<dbReference type="GO" id="GO:0016324">
    <property type="term" value="C:apical plasma membrane"/>
    <property type="evidence" value="ECO:0007669"/>
    <property type="project" value="UniProtKB-SubCell"/>
</dbReference>
<dbReference type="GO" id="GO:0033106">
    <property type="term" value="C:cis-Golgi network membrane"/>
    <property type="evidence" value="ECO:0000314"/>
    <property type="project" value="UniProtKB"/>
</dbReference>
<dbReference type="GO" id="GO:0005829">
    <property type="term" value="C:cytosol"/>
    <property type="evidence" value="ECO:0000304"/>
    <property type="project" value="Reactome"/>
</dbReference>
<dbReference type="GO" id="GO:0012505">
    <property type="term" value="C:endomembrane system"/>
    <property type="evidence" value="ECO:0000318"/>
    <property type="project" value="GO_Central"/>
</dbReference>
<dbReference type="GO" id="GO:0005789">
    <property type="term" value="C:endoplasmic reticulum membrane"/>
    <property type="evidence" value="ECO:0000314"/>
    <property type="project" value="UniProtKB"/>
</dbReference>
<dbReference type="GO" id="GO:0071782">
    <property type="term" value="C:endoplasmic reticulum tubular network"/>
    <property type="evidence" value="ECO:0000314"/>
    <property type="project" value="UniProtKB"/>
</dbReference>
<dbReference type="GO" id="GO:0005794">
    <property type="term" value="C:Golgi apparatus"/>
    <property type="evidence" value="ECO:0000318"/>
    <property type="project" value="GO_Central"/>
</dbReference>
<dbReference type="GO" id="GO:0005811">
    <property type="term" value="C:lipid droplet"/>
    <property type="evidence" value="ECO:0000314"/>
    <property type="project" value="UniProtKB"/>
</dbReference>
<dbReference type="GO" id="GO:0005886">
    <property type="term" value="C:plasma membrane"/>
    <property type="evidence" value="ECO:0000304"/>
    <property type="project" value="Reactome"/>
</dbReference>
<dbReference type="GO" id="GO:0030667">
    <property type="term" value="C:secretory granule membrane"/>
    <property type="evidence" value="ECO:0000304"/>
    <property type="project" value="Reactome"/>
</dbReference>
<dbReference type="GO" id="GO:0019003">
    <property type="term" value="F:GDP binding"/>
    <property type="evidence" value="ECO:0000314"/>
    <property type="project" value="UniProtKB"/>
</dbReference>
<dbReference type="GO" id="GO:0005525">
    <property type="term" value="F:GTP binding"/>
    <property type="evidence" value="ECO:0007669"/>
    <property type="project" value="UniProtKB-KW"/>
</dbReference>
<dbReference type="GO" id="GO:0003924">
    <property type="term" value="F:GTPase activity"/>
    <property type="evidence" value="ECO:0000314"/>
    <property type="project" value="UniProtKB"/>
</dbReference>
<dbReference type="GO" id="GO:0007420">
    <property type="term" value="P:brain development"/>
    <property type="evidence" value="ECO:0000250"/>
    <property type="project" value="UniProtKB"/>
</dbReference>
<dbReference type="GO" id="GO:0071786">
    <property type="term" value="P:endoplasmic reticulum tubular network organization"/>
    <property type="evidence" value="ECO:0000315"/>
    <property type="project" value="UniProtKB"/>
</dbReference>
<dbReference type="GO" id="GO:0001654">
    <property type="term" value="P:eye development"/>
    <property type="evidence" value="ECO:0000250"/>
    <property type="project" value="UniProtKB"/>
</dbReference>
<dbReference type="GO" id="GO:0006886">
    <property type="term" value="P:intracellular protein transport"/>
    <property type="evidence" value="ECO:0000318"/>
    <property type="project" value="GO_Central"/>
</dbReference>
<dbReference type="GO" id="GO:0034389">
    <property type="term" value="P:lipid droplet organization"/>
    <property type="evidence" value="ECO:0000315"/>
    <property type="project" value="MGI"/>
</dbReference>
<dbReference type="GO" id="GO:0007264">
    <property type="term" value="P:small GTPase-mediated signal transduction"/>
    <property type="evidence" value="ECO:0000303"/>
    <property type="project" value="UniProtKB"/>
</dbReference>
<dbReference type="CDD" id="cd01863">
    <property type="entry name" value="Rab18"/>
    <property type="match status" value="1"/>
</dbReference>
<dbReference type="FunFam" id="3.40.50.300:FF:000430">
    <property type="entry name" value="Probable Ras-related protein Rab-18"/>
    <property type="match status" value="1"/>
</dbReference>
<dbReference type="Gene3D" id="3.40.50.300">
    <property type="entry name" value="P-loop containing nucleotide triphosphate hydrolases"/>
    <property type="match status" value="1"/>
</dbReference>
<dbReference type="InterPro" id="IPR027417">
    <property type="entry name" value="P-loop_NTPase"/>
</dbReference>
<dbReference type="InterPro" id="IPR050227">
    <property type="entry name" value="Rab"/>
</dbReference>
<dbReference type="InterPro" id="IPR025662">
    <property type="entry name" value="Sigma_54_int_dom_ATP-bd_1"/>
</dbReference>
<dbReference type="InterPro" id="IPR005225">
    <property type="entry name" value="Small_GTP-bd"/>
</dbReference>
<dbReference type="InterPro" id="IPR001806">
    <property type="entry name" value="Small_GTPase"/>
</dbReference>
<dbReference type="NCBIfam" id="TIGR00231">
    <property type="entry name" value="small_GTP"/>
    <property type="match status" value="1"/>
</dbReference>
<dbReference type="PANTHER" id="PTHR47977">
    <property type="entry name" value="RAS-RELATED PROTEIN RAB"/>
    <property type="match status" value="1"/>
</dbReference>
<dbReference type="Pfam" id="PF00071">
    <property type="entry name" value="Ras"/>
    <property type="match status" value="1"/>
</dbReference>
<dbReference type="PRINTS" id="PR00449">
    <property type="entry name" value="RASTRNSFRMNG"/>
</dbReference>
<dbReference type="SMART" id="SM00177">
    <property type="entry name" value="ARF"/>
    <property type="match status" value="1"/>
</dbReference>
<dbReference type="SMART" id="SM00175">
    <property type="entry name" value="RAB"/>
    <property type="match status" value="1"/>
</dbReference>
<dbReference type="SMART" id="SM00176">
    <property type="entry name" value="RAN"/>
    <property type="match status" value="1"/>
</dbReference>
<dbReference type="SMART" id="SM00173">
    <property type="entry name" value="RAS"/>
    <property type="match status" value="1"/>
</dbReference>
<dbReference type="SMART" id="SM00174">
    <property type="entry name" value="RHO"/>
    <property type="match status" value="1"/>
</dbReference>
<dbReference type="SUPFAM" id="SSF52540">
    <property type="entry name" value="P-loop containing nucleoside triphosphate hydrolases"/>
    <property type="match status" value="1"/>
</dbReference>
<dbReference type="PROSITE" id="PS51419">
    <property type="entry name" value="RAB"/>
    <property type="match status" value="1"/>
</dbReference>
<accession>Q9NP72</accession>
<accession>B3KMC7</accession>
<accession>B7Z333</accession>
<accession>D3DRW1</accession>
<accession>Q53FX8</accession>
<accession>Q56UN9</accession>
<accession>Q6FIH1</accession>
<evidence type="ECO:0000250" key="1"/>
<evidence type="ECO:0000250" key="2">
    <source>
        <dbReference type="UniProtKB" id="P35293"/>
    </source>
</evidence>
<evidence type="ECO:0000250" key="3">
    <source>
        <dbReference type="UniProtKB" id="P62820"/>
    </source>
</evidence>
<evidence type="ECO:0000255" key="4"/>
<evidence type="ECO:0000269" key="5">
    <source>
    </source>
</evidence>
<evidence type="ECO:0000269" key="6">
    <source>
    </source>
</evidence>
<evidence type="ECO:0000269" key="7">
    <source>
    </source>
</evidence>
<evidence type="ECO:0000269" key="8">
    <source>
    </source>
</evidence>
<evidence type="ECO:0000269" key="9">
    <source>
    </source>
</evidence>
<evidence type="ECO:0000269" key="10">
    <source>
    </source>
</evidence>
<evidence type="ECO:0000269" key="11">
    <source>
    </source>
</evidence>
<evidence type="ECO:0000269" key="12">
    <source ref="15"/>
</evidence>
<evidence type="ECO:0000269" key="13">
    <source ref="24"/>
</evidence>
<evidence type="ECO:0000303" key="14">
    <source>
    </source>
</evidence>
<evidence type="ECO:0000303" key="15">
    <source>
    </source>
</evidence>
<evidence type="ECO:0000305" key="16"/>
<evidence type="ECO:0000305" key="17">
    <source>
    </source>
</evidence>
<evidence type="ECO:0000305" key="18">
    <source ref="24"/>
</evidence>
<evidence type="ECO:0000312" key="19">
    <source>
        <dbReference type="HGNC" id="HGNC:14244"/>
    </source>
</evidence>
<evidence type="ECO:0007744" key="20">
    <source>
        <dbReference type="PDB" id="1X3S"/>
    </source>
</evidence>
<evidence type="ECO:0007744" key="21">
    <source>
    </source>
</evidence>
<evidence type="ECO:0007829" key="22">
    <source>
        <dbReference type="PDB" id="1X3S"/>
    </source>
</evidence>
<reference key="1">
    <citation type="submission" date="2000-04" db="EMBL/GenBank/DDBJ databases">
        <title>In silico cloning of the human Rab18 gene.</title>
        <authorList>
            <person name="Chikri M.M."/>
            <person name="Boutin M.P."/>
            <person name="Vaxillaire M.M."/>
            <person name="Froguel M.P."/>
        </authorList>
    </citation>
    <scope>NUCLEOTIDE SEQUENCE [GENOMIC DNA]</scope>
</reference>
<reference key="2">
    <citation type="journal article" date="2000" name="FEBS Lett.">
        <title>Isolation and characterisation of the human rab18 gene after stimulation of endothelial cells with histamine.</title>
        <authorList>
            <person name="Schaefer U."/>
            <person name="Seibold S."/>
            <person name="Schneider A."/>
            <person name="Neugebauer E."/>
        </authorList>
    </citation>
    <scope>NUCLEOTIDE SEQUENCE [MRNA] (ISOFORM 1)</scope>
</reference>
<reference key="3">
    <citation type="journal article" date="2005" name="DNA Seq.">
        <title>Cloning and characterization of a novel splice variant of human Rab18 gene (RAB18).</title>
        <authorList>
            <person name="Dou T."/>
            <person name="Ji C."/>
            <person name="Gu S."/>
            <person name="Chen F."/>
            <person name="Xu J."/>
            <person name="Ye X."/>
            <person name="Ying K."/>
            <person name="Xie Y."/>
            <person name="Mao Y."/>
        </authorList>
    </citation>
    <scope>NUCLEOTIDE SEQUENCE [MRNA] (ISOFORM 2)</scope>
    <scope>ALTERNATIVE SPLICING</scope>
</reference>
<reference key="4">
    <citation type="submission" date="2003-07" db="EMBL/GenBank/DDBJ databases">
        <title>Cloning and expression of a novel human cDNA homologous to murine ras-related protein (rab18) mRNA.</title>
        <authorList>
            <person name="Cui W.C."/>
            <person name="Yu L."/>
            <person name="Liu Q."/>
            <person name="Lin W."/>
            <person name="Han X.F."/>
            <person name="Zhao S.Y."/>
        </authorList>
    </citation>
    <scope>NUCLEOTIDE SEQUENCE [MRNA] (ISOFORM 1)</scope>
</reference>
<reference key="5">
    <citation type="submission" date="2002-04" db="EMBL/GenBank/DDBJ databases">
        <title>cDNA clones of human proteins involved in signal transduction sequenced by the Guthrie cDNA resource center (www.cdna.org).</title>
        <authorList>
            <person name="Puhl H.L. III"/>
            <person name="Ikeda S.R."/>
            <person name="Aronstam R.S."/>
        </authorList>
    </citation>
    <scope>NUCLEOTIDE SEQUENCE [LARGE SCALE MRNA] (ISOFORM 1)</scope>
    <source>
        <tissue>Brain</tissue>
    </source>
</reference>
<reference key="6">
    <citation type="journal article" date="2000" name="Proc. Natl. Acad. Sci. U.S.A.">
        <title>Gene expression profiling in the human hypothalamus-pituitary-adrenal axis and full-length cDNA cloning.</title>
        <authorList>
            <person name="Hu R.-M."/>
            <person name="Han Z.-G."/>
            <person name="Song H.-D."/>
            <person name="Peng Y.-D."/>
            <person name="Huang Q.-H."/>
            <person name="Ren S.-X."/>
            <person name="Gu Y.-J."/>
            <person name="Huang C.-H."/>
            <person name="Li Y.-B."/>
            <person name="Jiang C.-L."/>
            <person name="Fu G."/>
            <person name="Zhang Q.-H."/>
            <person name="Gu B.-W."/>
            <person name="Dai M."/>
            <person name="Mao Y.-F."/>
            <person name="Gao G.-F."/>
            <person name="Rong R."/>
            <person name="Ye M."/>
            <person name="Zhou J."/>
            <person name="Xu S.-H."/>
            <person name="Gu J."/>
            <person name="Shi J.-X."/>
            <person name="Jin W.-R."/>
            <person name="Zhang C.-K."/>
            <person name="Wu T.-M."/>
            <person name="Huang G.-Y."/>
            <person name="Chen Z."/>
            <person name="Chen M.-D."/>
            <person name="Chen J.-L."/>
        </authorList>
    </citation>
    <scope>NUCLEOTIDE SEQUENCE [LARGE SCALE MRNA] (ISOFORM 1)</scope>
    <source>
        <tissue>Adrenal gland</tissue>
    </source>
</reference>
<reference key="7">
    <citation type="journal article" date="2001" name="Genome Res.">
        <title>Towards a catalog of human genes and proteins: sequencing and analysis of 500 novel complete protein coding human cDNAs.</title>
        <authorList>
            <person name="Wiemann S."/>
            <person name="Weil B."/>
            <person name="Wellenreuther R."/>
            <person name="Gassenhuber J."/>
            <person name="Glassl S."/>
            <person name="Ansorge W."/>
            <person name="Boecher M."/>
            <person name="Bloecker H."/>
            <person name="Bauersachs S."/>
            <person name="Blum H."/>
            <person name="Lauber J."/>
            <person name="Duesterhoeft A."/>
            <person name="Beyer A."/>
            <person name="Koehrer K."/>
            <person name="Strack N."/>
            <person name="Mewes H.-W."/>
            <person name="Ottenwaelder B."/>
            <person name="Obermaier B."/>
            <person name="Tampe J."/>
            <person name="Heubner D."/>
            <person name="Wambutt R."/>
            <person name="Korn B."/>
            <person name="Klein M."/>
            <person name="Poustka A."/>
        </authorList>
    </citation>
    <scope>NUCLEOTIDE SEQUENCE [LARGE SCALE MRNA] (ISOFORM 1)</scope>
    <source>
        <tissue>Testis</tissue>
    </source>
</reference>
<reference key="8">
    <citation type="submission" date="2003-08" db="EMBL/GenBank/DDBJ databases">
        <title>Cloning of human full-length CDSs in BD Creator(TM) system donor vector.</title>
        <authorList>
            <person name="Kalnine N."/>
            <person name="Chen X."/>
            <person name="Rolfs A."/>
            <person name="Halleck A."/>
            <person name="Hines L."/>
            <person name="Eisenstein S."/>
            <person name="Koundinya M."/>
            <person name="Raphael J."/>
            <person name="Moreira D."/>
            <person name="Kelley T."/>
            <person name="LaBaer J."/>
            <person name="Lin Y."/>
            <person name="Phelan M."/>
            <person name="Farmer A."/>
        </authorList>
    </citation>
    <scope>NUCLEOTIDE SEQUENCE [LARGE SCALE MRNA] (ISOFORM 1)</scope>
</reference>
<reference key="9">
    <citation type="submission" date="2004-06" db="EMBL/GenBank/DDBJ databases">
        <title>Cloning of human full open reading frames in Gateway(TM) system entry vector (pDONR201).</title>
        <authorList>
            <person name="Ebert L."/>
            <person name="Schick M."/>
            <person name="Neubert P."/>
            <person name="Schatten R."/>
            <person name="Henze S."/>
            <person name="Korn B."/>
        </authorList>
    </citation>
    <scope>NUCLEOTIDE SEQUENCE [LARGE SCALE MRNA] (ISOFORM 1)</scope>
</reference>
<reference key="10">
    <citation type="journal article" date="2004" name="Nat. Genet.">
        <title>Complete sequencing and characterization of 21,243 full-length human cDNAs.</title>
        <authorList>
            <person name="Ota T."/>
            <person name="Suzuki Y."/>
            <person name="Nishikawa T."/>
            <person name="Otsuki T."/>
            <person name="Sugiyama T."/>
            <person name="Irie R."/>
            <person name="Wakamatsu A."/>
            <person name="Hayashi K."/>
            <person name="Sato H."/>
            <person name="Nagai K."/>
            <person name="Kimura K."/>
            <person name="Makita H."/>
            <person name="Sekine M."/>
            <person name="Obayashi M."/>
            <person name="Nishi T."/>
            <person name="Shibahara T."/>
            <person name="Tanaka T."/>
            <person name="Ishii S."/>
            <person name="Yamamoto J."/>
            <person name="Saito K."/>
            <person name="Kawai Y."/>
            <person name="Isono Y."/>
            <person name="Nakamura Y."/>
            <person name="Nagahari K."/>
            <person name="Murakami K."/>
            <person name="Yasuda T."/>
            <person name="Iwayanagi T."/>
            <person name="Wagatsuma M."/>
            <person name="Shiratori A."/>
            <person name="Sudo H."/>
            <person name="Hosoiri T."/>
            <person name="Kaku Y."/>
            <person name="Kodaira H."/>
            <person name="Kondo H."/>
            <person name="Sugawara M."/>
            <person name="Takahashi M."/>
            <person name="Kanda K."/>
            <person name="Yokoi T."/>
            <person name="Furuya T."/>
            <person name="Kikkawa E."/>
            <person name="Omura Y."/>
            <person name="Abe K."/>
            <person name="Kamihara K."/>
            <person name="Katsuta N."/>
            <person name="Sato K."/>
            <person name="Tanikawa M."/>
            <person name="Yamazaki M."/>
            <person name="Ninomiya K."/>
            <person name="Ishibashi T."/>
            <person name="Yamashita H."/>
            <person name="Murakawa K."/>
            <person name="Fujimori K."/>
            <person name="Tanai H."/>
            <person name="Kimata M."/>
            <person name="Watanabe M."/>
            <person name="Hiraoka S."/>
            <person name="Chiba Y."/>
            <person name="Ishida S."/>
            <person name="Ono Y."/>
            <person name="Takiguchi S."/>
            <person name="Watanabe S."/>
            <person name="Yosida M."/>
            <person name="Hotuta T."/>
            <person name="Kusano J."/>
            <person name="Kanehori K."/>
            <person name="Takahashi-Fujii A."/>
            <person name="Hara H."/>
            <person name="Tanase T.-O."/>
            <person name="Nomura Y."/>
            <person name="Togiya S."/>
            <person name="Komai F."/>
            <person name="Hara R."/>
            <person name="Takeuchi K."/>
            <person name="Arita M."/>
            <person name="Imose N."/>
            <person name="Musashino K."/>
            <person name="Yuuki H."/>
            <person name="Oshima A."/>
            <person name="Sasaki N."/>
            <person name="Aotsuka S."/>
            <person name="Yoshikawa Y."/>
            <person name="Matsunawa H."/>
            <person name="Ichihara T."/>
            <person name="Shiohata N."/>
            <person name="Sano S."/>
            <person name="Moriya S."/>
            <person name="Momiyama H."/>
            <person name="Satoh N."/>
            <person name="Takami S."/>
            <person name="Terashima Y."/>
            <person name="Suzuki O."/>
            <person name="Nakagawa S."/>
            <person name="Senoh A."/>
            <person name="Mizoguchi H."/>
            <person name="Goto Y."/>
            <person name="Shimizu F."/>
            <person name="Wakebe H."/>
            <person name="Hishigaki H."/>
            <person name="Watanabe T."/>
            <person name="Sugiyama A."/>
            <person name="Takemoto M."/>
            <person name="Kawakami B."/>
            <person name="Yamazaki M."/>
            <person name="Watanabe K."/>
            <person name="Kumagai A."/>
            <person name="Itakura S."/>
            <person name="Fukuzumi Y."/>
            <person name="Fujimori Y."/>
            <person name="Komiyama M."/>
            <person name="Tashiro H."/>
            <person name="Tanigami A."/>
            <person name="Fujiwara T."/>
            <person name="Ono T."/>
            <person name="Yamada K."/>
            <person name="Fujii Y."/>
            <person name="Ozaki K."/>
            <person name="Hirao M."/>
            <person name="Ohmori Y."/>
            <person name="Kawabata A."/>
            <person name="Hikiji T."/>
            <person name="Kobatake N."/>
            <person name="Inagaki H."/>
            <person name="Ikema Y."/>
            <person name="Okamoto S."/>
            <person name="Okitani R."/>
            <person name="Kawakami T."/>
            <person name="Noguchi S."/>
            <person name="Itoh T."/>
            <person name="Shigeta K."/>
            <person name="Senba T."/>
            <person name="Matsumura K."/>
            <person name="Nakajima Y."/>
            <person name="Mizuno T."/>
            <person name="Morinaga M."/>
            <person name="Sasaki M."/>
            <person name="Togashi T."/>
            <person name="Oyama M."/>
            <person name="Hata H."/>
            <person name="Watanabe M."/>
            <person name="Komatsu T."/>
            <person name="Mizushima-Sugano J."/>
            <person name="Satoh T."/>
            <person name="Shirai Y."/>
            <person name="Takahashi Y."/>
            <person name="Nakagawa K."/>
            <person name="Okumura K."/>
            <person name="Nagase T."/>
            <person name="Nomura N."/>
            <person name="Kikuchi H."/>
            <person name="Masuho Y."/>
            <person name="Yamashita R."/>
            <person name="Nakai K."/>
            <person name="Yada T."/>
            <person name="Nakamura Y."/>
            <person name="Ohara O."/>
            <person name="Isogai T."/>
            <person name="Sugano S."/>
        </authorList>
    </citation>
    <scope>NUCLEOTIDE SEQUENCE [LARGE SCALE MRNA] (ISOFORMS 1 AND 3)</scope>
    <source>
        <tissue>Corpus callosum</tissue>
    </source>
</reference>
<reference key="11">
    <citation type="submission" date="2005-04" db="EMBL/GenBank/DDBJ databases">
        <authorList>
            <person name="Suzuki Y."/>
            <person name="Sugano S."/>
            <person name="Totoki Y."/>
            <person name="Toyoda A."/>
            <person name="Takeda T."/>
            <person name="Sakaki Y."/>
            <person name="Tanaka A."/>
            <person name="Yokoyama S."/>
        </authorList>
    </citation>
    <scope>NUCLEOTIDE SEQUENCE [LARGE SCALE MRNA] (ISOFORM 1)</scope>
    <source>
        <tissue>Lung</tissue>
    </source>
</reference>
<reference key="12">
    <citation type="journal article" date="2004" name="Nature">
        <title>The DNA sequence and comparative analysis of human chromosome 10.</title>
        <authorList>
            <person name="Deloukas P."/>
            <person name="Earthrowl M.E."/>
            <person name="Grafham D.V."/>
            <person name="Rubenfield M."/>
            <person name="French L."/>
            <person name="Steward C.A."/>
            <person name="Sims S.K."/>
            <person name="Jones M.C."/>
            <person name="Searle S."/>
            <person name="Scott C."/>
            <person name="Howe K."/>
            <person name="Hunt S.E."/>
            <person name="Andrews T.D."/>
            <person name="Gilbert J.G.R."/>
            <person name="Swarbreck D."/>
            <person name="Ashurst J.L."/>
            <person name="Taylor A."/>
            <person name="Battles J."/>
            <person name="Bird C.P."/>
            <person name="Ainscough R."/>
            <person name="Almeida J.P."/>
            <person name="Ashwell R.I.S."/>
            <person name="Ambrose K.D."/>
            <person name="Babbage A.K."/>
            <person name="Bagguley C.L."/>
            <person name="Bailey J."/>
            <person name="Banerjee R."/>
            <person name="Bates K."/>
            <person name="Beasley H."/>
            <person name="Bray-Allen S."/>
            <person name="Brown A.J."/>
            <person name="Brown J.Y."/>
            <person name="Burford D.C."/>
            <person name="Burrill W."/>
            <person name="Burton J."/>
            <person name="Cahill P."/>
            <person name="Camire D."/>
            <person name="Carter N.P."/>
            <person name="Chapman J.C."/>
            <person name="Clark S.Y."/>
            <person name="Clarke G."/>
            <person name="Clee C.M."/>
            <person name="Clegg S."/>
            <person name="Corby N."/>
            <person name="Coulson A."/>
            <person name="Dhami P."/>
            <person name="Dutta I."/>
            <person name="Dunn M."/>
            <person name="Faulkner L."/>
            <person name="Frankish A."/>
            <person name="Frankland J.A."/>
            <person name="Garner P."/>
            <person name="Garnett J."/>
            <person name="Gribble S."/>
            <person name="Griffiths C."/>
            <person name="Grocock R."/>
            <person name="Gustafson E."/>
            <person name="Hammond S."/>
            <person name="Harley J.L."/>
            <person name="Hart E."/>
            <person name="Heath P.D."/>
            <person name="Ho T.P."/>
            <person name="Hopkins B."/>
            <person name="Horne J."/>
            <person name="Howden P.J."/>
            <person name="Huckle E."/>
            <person name="Hynds C."/>
            <person name="Johnson C."/>
            <person name="Johnson D."/>
            <person name="Kana A."/>
            <person name="Kay M."/>
            <person name="Kimberley A.M."/>
            <person name="Kershaw J.K."/>
            <person name="Kokkinaki M."/>
            <person name="Laird G.K."/>
            <person name="Lawlor S."/>
            <person name="Lee H.M."/>
            <person name="Leongamornlert D.A."/>
            <person name="Laird G."/>
            <person name="Lloyd C."/>
            <person name="Lloyd D.M."/>
            <person name="Loveland J."/>
            <person name="Lovell J."/>
            <person name="McLaren S."/>
            <person name="McLay K.E."/>
            <person name="McMurray A."/>
            <person name="Mashreghi-Mohammadi M."/>
            <person name="Matthews L."/>
            <person name="Milne S."/>
            <person name="Nickerson T."/>
            <person name="Nguyen M."/>
            <person name="Overton-Larty E."/>
            <person name="Palmer S.A."/>
            <person name="Pearce A.V."/>
            <person name="Peck A.I."/>
            <person name="Pelan S."/>
            <person name="Phillimore B."/>
            <person name="Porter K."/>
            <person name="Rice C.M."/>
            <person name="Rogosin A."/>
            <person name="Ross M.T."/>
            <person name="Sarafidou T."/>
            <person name="Sehra H.K."/>
            <person name="Shownkeen R."/>
            <person name="Skuce C.D."/>
            <person name="Smith M."/>
            <person name="Standring L."/>
            <person name="Sycamore N."/>
            <person name="Tester J."/>
            <person name="Thorpe A."/>
            <person name="Torcasso W."/>
            <person name="Tracey A."/>
            <person name="Tromans A."/>
            <person name="Tsolas J."/>
            <person name="Wall M."/>
            <person name="Walsh J."/>
            <person name="Wang H."/>
            <person name="Weinstock K."/>
            <person name="West A.P."/>
            <person name="Willey D.L."/>
            <person name="Whitehead S.L."/>
            <person name="Wilming L."/>
            <person name="Wray P.W."/>
            <person name="Young L."/>
            <person name="Chen Y."/>
            <person name="Lovering R.C."/>
            <person name="Moschonas N.K."/>
            <person name="Siebert R."/>
            <person name="Fechtel K."/>
            <person name="Bentley D."/>
            <person name="Durbin R.M."/>
            <person name="Hubbard T."/>
            <person name="Doucette-Stamm L."/>
            <person name="Beck S."/>
            <person name="Smith D.R."/>
            <person name="Rogers J."/>
        </authorList>
    </citation>
    <scope>NUCLEOTIDE SEQUENCE [LARGE SCALE GENOMIC DNA]</scope>
</reference>
<reference key="13">
    <citation type="submission" date="2005-09" db="EMBL/GenBank/DDBJ databases">
        <authorList>
            <person name="Mural R.J."/>
            <person name="Istrail S."/>
            <person name="Sutton G.G."/>
            <person name="Florea L."/>
            <person name="Halpern A.L."/>
            <person name="Mobarry C.M."/>
            <person name="Lippert R."/>
            <person name="Walenz B."/>
            <person name="Shatkay H."/>
            <person name="Dew I."/>
            <person name="Miller J.R."/>
            <person name="Flanigan M.J."/>
            <person name="Edwards N.J."/>
            <person name="Bolanos R."/>
            <person name="Fasulo D."/>
            <person name="Halldorsson B.V."/>
            <person name="Hannenhalli S."/>
            <person name="Turner R."/>
            <person name="Yooseph S."/>
            <person name="Lu F."/>
            <person name="Nusskern D.R."/>
            <person name="Shue B.C."/>
            <person name="Zheng X.H."/>
            <person name="Zhong F."/>
            <person name="Delcher A.L."/>
            <person name="Huson D.H."/>
            <person name="Kravitz S.A."/>
            <person name="Mouchard L."/>
            <person name="Reinert K."/>
            <person name="Remington K.A."/>
            <person name="Clark A.G."/>
            <person name="Waterman M.S."/>
            <person name="Eichler E.E."/>
            <person name="Adams M.D."/>
            <person name="Hunkapiller M.W."/>
            <person name="Myers E.W."/>
            <person name="Venter J.C."/>
        </authorList>
    </citation>
    <scope>NUCLEOTIDE SEQUENCE [LARGE SCALE GENOMIC DNA]</scope>
</reference>
<reference key="14">
    <citation type="journal article" date="2004" name="Genome Res.">
        <title>The status, quality, and expansion of the NIH full-length cDNA project: the Mammalian Gene Collection (MGC).</title>
        <authorList>
            <consortium name="The MGC Project Team"/>
        </authorList>
    </citation>
    <scope>NUCLEOTIDE SEQUENCE [LARGE SCALE MRNA] (ISOFORM 1)</scope>
    <source>
        <tissue>Hippocampus</tissue>
        <tissue>Skin</tissue>
    </source>
</reference>
<reference key="15">
    <citation type="submission" date="2009-03" db="UniProtKB">
        <authorList>
            <person name="Bienvenut W.V."/>
            <person name="Waridel P."/>
            <person name="Quadroni M."/>
        </authorList>
    </citation>
    <scope>PROTEIN SEQUENCE OF 1-21; 59-69 AND 99-123</scope>
    <scope>ACETYLATION AT MET-1</scope>
    <scope>IDENTIFICATION BY MASS SPECTROMETRY</scope>
    <source>
        <tissue>Embryonic kidney</tissue>
    </source>
</reference>
<reference key="16">
    <citation type="journal article" date="2011" name="BMC Syst. Biol.">
        <title>Initial characterization of the human central proteome.</title>
        <authorList>
            <person name="Burkard T.R."/>
            <person name="Planyavsky M."/>
            <person name="Kaupe I."/>
            <person name="Breitwieser F.P."/>
            <person name="Buerckstuemmer T."/>
            <person name="Bennett K.L."/>
            <person name="Superti-Furga G."/>
            <person name="Colinge J."/>
        </authorList>
    </citation>
    <scope>IDENTIFICATION BY MASS SPECTROMETRY [LARGE SCALE ANALYSIS]</scope>
</reference>
<reference key="17">
    <citation type="journal article" date="2012" name="Mol. Cell. Proteomics">
        <title>Comparative large-scale characterisation of plant vs. mammal proteins reveals similar and idiosyncratic N-alpha acetylation features.</title>
        <authorList>
            <person name="Bienvenut W.V."/>
            <person name="Sumpton D."/>
            <person name="Martinez A."/>
            <person name="Lilla S."/>
            <person name="Espagne C."/>
            <person name="Meinnel T."/>
            <person name="Giglione C."/>
        </authorList>
    </citation>
    <scope>ACETYLATION [LARGE SCALE ANALYSIS] AT MET-1</scope>
    <scope>IDENTIFICATION BY MASS SPECTROMETRY [LARGE SCALE ANALYSIS]</scope>
</reference>
<reference key="18">
    <citation type="journal article" date="2013" name="PLoS Pathog.">
        <title>Rab18 binds to hepatitis C virus NS5A and promotes interaction between sites of viral replication and lipid droplets.</title>
        <authorList>
            <person name="Salloum S."/>
            <person name="Wang H."/>
            <person name="Ferguson C."/>
            <person name="Parton R.G."/>
            <person name="Tai A.W."/>
        </authorList>
    </citation>
    <scope>INTERACTION WITH HCV NON-STRUCTURAL PROTEIN 5A (MICROBIAL INFECTION)</scope>
    <scope>SUBCELLULAR LOCATION</scope>
</reference>
<reference key="19">
    <citation type="journal article" date="2014" name="J. Cell Biol.">
        <title>Rab18 and a Rab18 GEF complex are required for normal ER structure.</title>
        <authorList>
            <person name="Gerondopoulos A."/>
            <person name="Bastos R.N."/>
            <person name="Yoshimura S."/>
            <person name="Anderson R."/>
            <person name="Carpanini S."/>
            <person name="Aligianis I."/>
            <person name="Handley M.T."/>
            <person name="Barr F.A."/>
        </authorList>
    </citation>
    <scope>FUNCTION</scope>
    <scope>CATALYTIC ACTIVITY</scope>
    <scope>SUBCELLULAR LOCATION</scope>
    <scope>ACTIVITY REGULATION</scope>
</reference>
<reference key="20">
    <citation type="journal article" date="2015" name="Open Biol.">
        <title>Warburg Micro syndrome is caused by RAB18 deficiency or dysregulation.</title>
        <authorList>
            <person name="Handley M.T."/>
            <person name="Carpanini S.M."/>
            <person name="Mali G.R."/>
            <person name="Sidjanin D.J."/>
            <person name="Aligianis I.A."/>
            <person name="Jackson I.J."/>
            <person name="FitzPatrick D.R."/>
        </authorList>
    </citation>
    <scope>ACTIVITY REGULATION</scope>
    <scope>SUBCELLULAR LOCATION</scope>
</reference>
<reference key="21">
    <citation type="journal article" date="2015" name="Proteomics">
        <title>N-terminome analysis of the human mitochondrial proteome.</title>
        <authorList>
            <person name="Vaca Jacome A.S."/>
            <person name="Rabilloud T."/>
            <person name="Schaeffer-Reiss C."/>
            <person name="Rompais M."/>
            <person name="Ayoub D."/>
            <person name="Lane L."/>
            <person name="Bairoch A."/>
            <person name="Van Dorsselaer A."/>
            <person name="Carapito C."/>
        </authorList>
    </citation>
    <scope>IDENTIFICATION BY MASS SPECTROMETRY [LARGE SCALE ANALYSIS]</scope>
</reference>
<reference key="22">
    <citation type="journal article" date="2019" name="Cell Biol. Int.">
        <title>DFCP1 associates with lipid droplets.</title>
        <authorList>
            <person name="Gao G."/>
            <person name="Sheng Y."/>
            <person name="Yang H."/>
            <person name="Chua B.T."/>
            <person name="Xu L."/>
        </authorList>
    </citation>
    <scope>INTERACTION WITH ZFYVE1</scope>
</reference>
<reference key="23">
    <citation type="journal article" date="2019" name="Cell Rep.">
        <title>The ER-Localized Protein DFCP1 Modulates ER-Lipid Droplet Contact Formation.</title>
        <authorList>
            <person name="Li D."/>
            <person name="Zhao Y.G."/>
            <person name="Li D."/>
            <person name="Zhao H."/>
            <person name="Huang J."/>
            <person name="Miao G."/>
            <person name="Feng D."/>
            <person name="Liu P."/>
            <person name="Li D."/>
            <person name="Zhang H."/>
        </authorList>
    </citation>
    <scope>FUNCTION</scope>
    <scope>SUBCELLULAR LOCATION</scope>
    <scope>INTERACTION WITH ZW10; ZFYVE1 AND BSCL2</scope>
    <scope>MUTAGENESIS OF SER-22 AND GLN-67</scope>
</reference>
<reference evidence="20" key="24">
    <citation type="submission" date="2009-02" db="PDB data bank">
        <title>Crystal structure of human RAB18 in complex with GPPNHP.</title>
        <authorList>
            <consortium name="RIKEN structural genomics initiative (RSGI)"/>
        </authorList>
    </citation>
    <scope>X-RAY CRYSTALLOGRAPHY (1.32 ANGSTROMS) OF 1-182 IN COMPLEX WITH MG(2+) AND GTP ANALOG</scope>
</reference>
<reference key="25">
    <citation type="journal article" date="2011" name="Am. J. Hum. Genet.">
        <title>Loss-of-function mutations in RAB18 cause Warburg micro syndrome.</title>
        <authorList>
            <person name="Bem D."/>
            <person name="Yoshimura S."/>
            <person name="Nunes-Bastos R."/>
            <person name="Bond F.C."/>
            <person name="Kurian M.A."/>
            <person name="Rahman F."/>
            <person name="Handley M.T."/>
            <person name="Hadzhiev Y."/>
            <person name="Masood I."/>
            <person name="Straatman-Iwanowska A.A."/>
            <person name="Cullinane A.R."/>
            <person name="McNeill A."/>
            <person name="Pasha S.S."/>
            <person name="Kirby G.A."/>
            <person name="Foster K."/>
            <person name="Ahmed Z."/>
            <person name="Morton J.E."/>
            <person name="Williams D."/>
            <person name="Graham J.M."/>
            <person name="Dobyns W.B."/>
            <person name="Burglen L."/>
            <person name="Ainsworth J.R."/>
            <person name="Gissen P."/>
            <person name="Muller F."/>
            <person name="Maher E.R."/>
            <person name="Barr F.A."/>
            <person name="Aligianis I.A."/>
        </authorList>
    </citation>
    <scope>VARIANTS WARBM3 GLN-24 AND ARG-93 DEL</scope>
    <scope>FUNCTION</scope>
</reference>
<reference key="26">
    <citation type="journal article" date="2013" name="Hum. Mutat.">
        <title>Mutation spectrum in RAB3GAP1, RAB3GAP2, and RAB18 and genotype-phenotype correlations in Warburg micro syndrome and Martsolf syndrome.</title>
        <authorList>
            <person name="Handley M.T."/>
            <person name="Morris-Rosendahl D.J."/>
            <person name="Brown S."/>
            <person name="Macdonald F."/>
            <person name="Hardy C."/>
            <person name="Bem D."/>
            <person name="Carpanini S.M."/>
            <person name="Borck G."/>
            <person name="Martorell L."/>
            <person name="Izzi C."/>
            <person name="Faravelli F."/>
            <person name="Accorsi P."/>
            <person name="Pinelli L."/>
            <person name="Basel-Vanagaite L."/>
            <person name="Peretz G."/>
            <person name="Abdel-Salam G.M."/>
            <person name="Zaki M.S."/>
            <person name="Jansen A."/>
            <person name="Mowat D."/>
            <person name="Glass I."/>
            <person name="Stewart H."/>
            <person name="Mancini G."/>
            <person name="Lederer D."/>
            <person name="Roscioli T."/>
            <person name="Giuliano F."/>
            <person name="Plomp A.S."/>
            <person name="Rolfs A."/>
            <person name="Graham J.M."/>
            <person name="Seemanova E."/>
            <person name="Poo P."/>
            <person name="Garcia-Cazorla A."/>
            <person name="Edery P."/>
            <person name="Jackson I.J."/>
            <person name="Maher E.R."/>
            <person name="Aligianis I.A."/>
        </authorList>
    </citation>
    <scope>VARIANT WARBM3 MET-95</scope>
</reference>
<gene>
    <name evidence="19" type="primary">RAB18</name>
</gene>
<proteinExistence type="evidence at protein level"/>
<protein>
    <recommendedName>
        <fullName>Ras-related protein Rab-18</fullName>
        <ecNumber evidence="8">3.6.5.2</ecNumber>
    </recommendedName>
</protein>
<keyword id="KW-0002">3D-structure</keyword>
<keyword id="KW-0007">Acetylation</keyword>
<keyword id="KW-0025">Alternative splicing</keyword>
<keyword id="KW-1003">Cell membrane</keyword>
<keyword id="KW-0217">Developmental protein</keyword>
<keyword id="KW-0903">Direct protein sequencing</keyword>
<keyword id="KW-0256">Endoplasmic reticulum</keyword>
<keyword id="KW-0333">Golgi apparatus</keyword>
<keyword id="KW-0342">GTP-binding</keyword>
<keyword id="KW-0945">Host-virus interaction</keyword>
<keyword id="KW-0378">Hydrolase</keyword>
<keyword id="KW-0551">Lipid droplet</keyword>
<keyword id="KW-0449">Lipoprotein</keyword>
<keyword id="KW-0472">Membrane</keyword>
<keyword id="KW-0488">Methylation</keyword>
<keyword id="KW-0547">Nucleotide-binding</keyword>
<keyword id="KW-0564">Palmitate</keyword>
<keyword id="KW-0597">Phosphoprotein</keyword>
<keyword id="KW-0636">Prenylation</keyword>
<keyword id="KW-0653">Protein transport</keyword>
<keyword id="KW-1267">Proteomics identification</keyword>
<keyword id="KW-1185">Reference proteome</keyword>
<keyword id="KW-0813">Transport</keyword>
<organism>
    <name type="scientific">Homo sapiens</name>
    <name type="common">Human</name>
    <dbReference type="NCBI Taxonomy" id="9606"/>
    <lineage>
        <taxon>Eukaryota</taxon>
        <taxon>Metazoa</taxon>
        <taxon>Chordata</taxon>
        <taxon>Craniata</taxon>
        <taxon>Vertebrata</taxon>
        <taxon>Euteleostomi</taxon>
        <taxon>Mammalia</taxon>
        <taxon>Eutheria</taxon>
        <taxon>Euarchontoglires</taxon>
        <taxon>Primates</taxon>
        <taxon>Haplorrhini</taxon>
        <taxon>Catarrhini</taxon>
        <taxon>Hominidae</taxon>
        <taxon>Homo</taxon>
    </lineage>
</organism>
<feature type="chain" id="PRO_0000121193" description="Ras-related protein Rab-18">
    <location>
        <begin position="1"/>
        <end position="203"/>
    </location>
</feature>
<feature type="propeptide" id="PRO_0000370761" description="Removed in mature form" evidence="4">
    <location>
        <begin position="204"/>
        <end position="206"/>
    </location>
</feature>
<feature type="short sequence motif" description="Switch 1" evidence="3">
    <location>
        <begin position="31"/>
        <end position="45"/>
    </location>
</feature>
<feature type="short sequence motif" description="Switch 2" evidence="3">
    <location>
        <begin position="63"/>
        <end position="80"/>
    </location>
</feature>
<feature type="binding site" evidence="18 20">
    <location>
        <position position="17"/>
    </location>
    <ligand>
        <name>GTP</name>
        <dbReference type="ChEBI" id="CHEBI:37565"/>
    </ligand>
</feature>
<feature type="binding site" evidence="18 20">
    <location>
        <position position="20"/>
    </location>
    <ligand>
        <name>GTP</name>
        <dbReference type="ChEBI" id="CHEBI:37565"/>
    </ligand>
</feature>
<feature type="binding site" evidence="18 20">
    <location>
        <position position="21"/>
    </location>
    <ligand>
        <name>GTP</name>
        <dbReference type="ChEBI" id="CHEBI:37565"/>
    </ligand>
</feature>
<feature type="binding site" evidence="18 20">
    <location>
        <position position="22"/>
    </location>
    <ligand>
        <name>GTP</name>
        <dbReference type="ChEBI" id="CHEBI:37565"/>
    </ligand>
</feature>
<feature type="binding site" evidence="13 20">
    <location>
        <position position="22"/>
    </location>
    <ligand>
        <name>Mg(2+)</name>
        <dbReference type="ChEBI" id="CHEBI:18420"/>
    </ligand>
</feature>
<feature type="binding site" evidence="18 20">
    <location>
        <position position="23"/>
    </location>
    <ligand>
        <name>GTP</name>
        <dbReference type="ChEBI" id="CHEBI:37565"/>
    </ligand>
</feature>
<feature type="binding site" evidence="18 20">
    <location>
        <position position="34"/>
    </location>
    <ligand>
        <name>GTP</name>
        <dbReference type="ChEBI" id="CHEBI:37565"/>
    </ligand>
</feature>
<feature type="binding site" evidence="18 20">
    <location>
        <position position="35"/>
    </location>
    <ligand>
        <name>GTP</name>
        <dbReference type="ChEBI" id="CHEBI:37565"/>
    </ligand>
</feature>
<feature type="binding site" evidence="18 20">
    <location>
        <position position="40"/>
    </location>
    <ligand>
        <name>GTP</name>
        <dbReference type="ChEBI" id="CHEBI:37565"/>
    </ligand>
</feature>
<feature type="binding site" evidence="13 20">
    <location>
        <position position="40"/>
    </location>
    <ligand>
        <name>Mg(2+)</name>
        <dbReference type="ChEBI" id="CHEBI:18420"/>
    </ligand>
</feature>
<feature type="binding site" evidence="18 20">
    <location>
        <position position="66"/>
    </location>
    <ligand>
        <name>GTP</name>
        <dbReference type="ChEBI" id="CHEBI:37565"/>
    </ligand>
</feature>
<feature type="binding site" evidence="18 20">
    <location>
        <position position="123"/>
    </location>
    <ligand>
        <name>GTP</name>
        <dbReference type="ChEBI" id="CHEBI:37565"/>
    </ligand>
</feature>
<feature type="binding site" evidence="18 20">
    <location>
        <position position="125"/>
    </location>
    <ligand>
        <name>GTP</name>
        <dbReference type="ChEBI" id="CHEBI:37565"/>
    </ligand>
</feature>
<feature type="binding site" evidence="18 20">
    <location>
        <position position="152"/>
    </location>
    <ligand>
        <name>GTP</name>
        <dbReference type="ChEBI" id="CHEBI:37565"/>
    </ligand>
</feature>
<feature type="modified residue" description="N-acetylmethionine" evidence="12 21">
    <location>
        <position position="1"/>
    </location>
</feature>
<feature type="modified residue" description="Phosphoserine" evidence="2">
    <location>
        <position position="144"/>
    </location>
</feature>
<feature type="modified residue" description="Cysteine methyl ester" evidence="4">
    <location>
        <position position="203"/>
    </location>
</feature>
<feature type="lipid moiety-binding region" description="S-palmitoyl cysteine" evidence="4">
    <location>
        <position position="199"/>
    </location>
</feature>
<feature type="lipid moiety-binding region" description="S-geranylgeranyl cysteine" evidence="1">
    <location>
        <position position="203"/>
    </location>
</feature>
<feature type="splice variant" id="VSP_043912" description="In isoform 2." evidence="15">
    <original>W</original>
    <variation>WVTLHQQTANFFLKSQIGNSPILKWAMWQY</variation>
    <location>
        <position position="62"/>
    </location>
</feature>
<feature type="splice variant" id="VSP_044883" description="In isoform 3." evidence="14">
    <location>
        <begin position="63"/>
        <end position="126"/>
    </location>
</feature>
<feature type="sequence variant" id="VAR_066495" description="In WARBM3; abnormal endoplasmic reticulum structure; in fibroblasts ER spread away from the perinuclear region into the cell periphery and there is a loss of fragmentation of ER tubules; dbSNP:rs387906832." evidence="5">
    <original>L</original>
    <variation>Q</variation>
    <location>
        <position position="24"/>
    </location>
</feature>
<feature type="sequence variant" id="VAR_066496" description="In WARBM3; dbSNP:rs587776875." evidence="5">
    <location>
        <position position="93"/>
    </location>
</feature>
<feature type="sequence variant" id="VAR_086022" description="In WARBM3; uncertain significance." evidence="6">
    <original>T</original>
    <variation>M</variation>
    <location>
        <position position="95"/>
    </location>
</feature>
<feature type="sequence variant" id="VAR_051713" description="In dbSNP:rs12268932.">
    <original>N</original>
    <variation>S</variation>
    <location>
        <position position="113"/>
    </location>
</feature>
<feature type="sequence variant" id="VAR_034432" description="In dbSNP:rs11015859.">
    <original>A</original>
    <variation>T</variation>
    <location>
        <position position="198"/>
    </location>
</feature>
<feature type="mutagenesis site" description="Loss of localization to lipid droplets and interaction with ZFYVE1." evidence="10">
    <original>S</original>
    <variation>N</variation>
    <location>
        <position position="22"/>
    </location>
</feature>
<feature type="mutagenesis site" description="No loss of localization to lipid droplets and interaction with ZFYVE1." evidence="10">
    <original>Q</original>
    <variation>L</variation>
    <location>
        <position position="67"/>
    </location>
</feature>
<feature type="sequence conflict" description="In Ref. 11; BAD96873." evidence="16" ref="11">
    <original>I</original>
    <variation>L</variation>
    <location>
        <position position="61"/>
    </location>
</feature>
<feature type="strand" evidence="22">
    <location>
        <begin position="5"/>
        <end position="14"/>
    </location>
</feature>
<feature type="helix" evidence="22">
    <location>
        <begin position="21"/>
        <end position="30"/>
    </location>
</feature>
<feature type="strand" evidence="22">
    <location>
        <begin position="42"/>
        <end position="52"/>
    </location>
</feature>
<feature type="strand" evidence="22">
    <location>
        <begin position="55"/>
        <end position="64"/>
    </location>
</feature>
<feature type="helix" evidence="22">
    <location>
        <begin position="68"/>
        <end position="70"/>
    </location>
</feature>
<feature type="helix" evidence="22">
    <location>
        <begin position="74"/>
        <end position="78"/>
    </location>
</feature>
<feature type="strand" evidence="22">
    <location>
        <begin position="83"/>
        <end position="89"/>
    </location>
</feature>
<feature type="helix" evidence="22">
    <location>
        <begin position="93"/>
        <end position="97"/>
    </location>
</feature>
<feature type="helix" evidence="22">
    <location>
        <begin position="99"/>
        <end position="106"/>
    </location>
</feature>
<feature type="strand" evidence="22">
    <location>
        <begin position="116"/>
        <end position="122"/>
    </location>
</feature>
<feature type="strand" evidence="22">
    <location>
        <begin position="126"/>
        <end position="128"/>
    </location>
</feature>
<feature type="helix" evidence="22">
    <location>
        <begin position="133"/>
        <end position="142"/>
    </location>
</feature>
<feature type="strand" evidence="22">
    <location>
        <begin position="146"/>
        <end position="149"/>
    </location>
</feature>
<feature type="turn" evidence="22">
    <location>
        <begin position="152"/>
        <end position="154"/>
    </location>
</feature>
<feature type="helix" evidence="22">
    <location>
        <begin position="158"/>
        <end position="170"/>
    </location>
</feature>
<feature type="helix" evidence="22">
    <location>
        <begin position="173"/>
        <end position="175"/>
    </location>
</feature>
<name>RAB18_HUMAN</name>